<reference key="1">
    <citation type="journal article" date="2006" name="Mol. Microbiol.">
        <title>Role of pathogenicity island-associated integrases in the genome plasticity of uropathogenic Escherichia coli strain 536.</title>
        <authorList>
            <person name="Hochhut B."/>
            <person name="Wilde C."/>
            <person name="Balling G."/>
            <person name="Middendorf B."/>
            <person name="Dobrindt U."/>
            <person name="Brzuszkiewicz E."/>
            <person name="Gottschalk G."/>
            <person name="Carniel E."/>
            <person name="Hacker J."/>
        </authorList>
    </citation>
    <scope>NUCLEOTIDE SEQUENCE [LARGE SCALE GENOMIC DNA]</scope>
    <source>
        <strain>536 / UPEC</strain>
    </source>
</reference>
<protein>
    <recommendedName>
        <fullName evidence="1">N-methyl-L-tryptophan oxidase</fullName>
        <shortName evidence="1">MTOX</shortName>
        <ecNumber evidence="1">1.5.3.-</ecNumber>
    </recommendedName>
</protein>
<sequence length="372" mass="40916">MKYDLIIIGSGSVGAAAGYYATRAGLNVLMTDAHMPPHQHGSHHGDTRLIRHAYGEGEKYVPLVLRAQMLWDELSRHNEDDPIFVRSGVINLGPADSAFLANVAHSAEQWQLNVEKLDAQGIMARWPEIRVPDNYIGLFETDSGFLRSELAIKTWIQLAKEAGCAQLFNCPVTAIRHDDDGVTIETADGEYQAKKAIVCAGTWVKDLLPELPVQPVRKVFAWYQADGRYSVKNKFPAFTGELPNGDQYYGFPAENDALKIGKHNGGQVIHSADERVPFAEVVSDGSEAFPFLRNVLPGIGCCLYGAACTYDNSPDEDFIIDTLPGHDNTLLITGLSGHGFKFASVLGEIAADFAQDKKSDFDLTPFRLSRFQ</sequence>
<accession>Q0TJ15</accession>
<organism>
    <name type="scientific">Escherichia coli O6:K15:H31 (strain 536 / UPEC)</name>
    <dbReference type="NCBI Taxonomy" id="362663"/>
    <lineage>
        <taxon>Bacteria</taxon>
        <taxon>Pseudomonadati</taxon>
        <taxon>Pseudomonadota</taxon>
        <taxon>Gammaproteobacteria</taxon>
        <taxon>Enterobacterales</taxon>
        <taxon>Enterobacteriaceae</taxon>
        <taxon>Escherichia</taxon>
    </lineage>
</organism>
<feature type="chain" id="PRO_0000259022" description="N-methyl-L-tryptophan oxidase">
    <location>
        <begin position="1"/>
        <end position="372"/>
    </location>
</feature>
<feature type="binding site" evidence="1">
    <location>
        <begin position="4"/>
        <end position="34"/>
    </location>
    <ligand>
        <name>FAD</name>
        <dbReference type="ChEBI" id="CHEBI:57692"/>
    </ligand>
</feature>
<feature type="modified residue" description="S-8alpha-FAD cysteine" evidence="1">
    <location>
        <position position="308"/>
    </location>
</feature>
<comment type="function">
    <text evidence="1">Catalyzes the oxidative demethylation of N-methyl-L-tryptophan.</text>
</comment>
<comment type="catalytic activity">
    <reaction evidence="1">
        <text>N(alpha)-methyl-L-tryptophan + O2 + H2O = L-tryptophan + formaldehyde + H2O2</text>
        <dbReference type="Rhea" id="RHEA:28006"/>
        <dbReference type="ChEBI" id="CHEBI:15377"/>
        <dbReference type="ChEBI" id="CHEBI:15379"/>
        <dbReference type="ChEBI" id="CHEBI:16240"/>
        <dbReference type="ChEBI" id="CHEBI:16842"/>
        <dbReference type="ChEBI" id="CHEBI:57283"/>
        <dbReference type="ChEBI" id="CHEBI:57912"/>
    </reaction>
</comment>
<comment type="cofactor">
    <cofactor evidence="1">
        <name>FAD</name>
        <dbReference type="ChEBI" id="CHEBI:57692"/>
    </cofactor>
    <text evidence="1">Binds 1 FAD per subunit.</text>
</comment>
<comment type="subunit">
    <text evidence="1">Monomer.</text>
</comment>
<comment type="similarity">
    <text evidence="1">Belongs to the MSOX/MTOX family. MTOX subfamily.</text>
</comment>
<evidence type="ECO:0000255" key="1">
    <source>
        <dbReference type="HAMAP-Rule" id="MF_00515"/>
    </source>
</evidence>
<proteinExistence type="inferred from homology"/>
<gene>
    <name evidence="1" type="primary">solA</name>
    <name type="ordered locus">ECP_1051</name>
</gene>
<dbReference type="EC" id="1.5.3.-" evidence="1"/>
<dbReference type="EMBL" id="CP000247">
    <property type="protein sequence ID" value="ABG69064.1"/>
    <property type="molecule type" value="Genomic_DNA"/>
</dbReference>
<dbReference type="RefSeq" id="WP_000872794.1">
    <property type="nucleotide sequence ID" value="NC_008253.1"/>
</dbReference>
<dbReference type="SMR" id="Q0TJ15"/>
<dbReference type="KEGG" id="ecp:ECP_1051"/>
<dbReference type="HOGENOM" id="CLU_007884_2_1_6"/>
<dbReference type="Proteomes" id="UP000009182">
    <property type="component" value="Chromosome"/>
</dbReference>
<dbReference type="GO" id="GO:0005829">
    <property type="term" value="C:cytosol"/>
    <property type="evidence" value="ECO:0007669"/>
    <property type="project" value="TreeGrafter"/>
</dbReference>
<dbReference type="GO" id="GO:0050660">
    <property type="term" value="F:flavin adenine dinucleotide binding"/>
    <property type="evidence" value="ECO:0007669"/>
    <property type="project" value="InterPro"/>
</dbReference>
<dbReference type="GO" id="GO:0050131">
    <property type="term" value="F:N-methyl-L-amino-acid oxidase activity"/>
    <property type="evidence" value="ECO:0007669"/>
    <property type="project" value="InterPro"/>
</dbReference>
<dbReference type="GO" id="GO:0008115">
    <property type="term" value="F:sarcosine oxidase activity"/>
    <property type="evidence" value="ECO:0007669"/>
    <property type="project" value="TreeGrafter"/>
</dbReference>
<dbReference type="Gene3D" id="3.30.9.10">
    <property type="entry name" value="D-Amino Acid Oxidase, subunit A, domain 2"/>
    <property type="match status" value="1"/>
</dbReference>
<dbReference type="Gene3D" id="3.50.50.60">
    <property type="entry name" value="FAD/NAD(P)-binding domain"/>
    <property type="match status" value="1"/>
</dbReference>
<dbReference type="HAMAP" id="MF_00515">
    <property type="entry name" value="MTOX"/>
    <property type="match status" value="1"/>
</dbReference>
<dbReference type="InterPro" id="IPR006076">
    <property type="entry name" value="FAD-dep_OxRdtase"/>
</dbReference>
<dbReference type="InterPro" id="IPR036188">
    <property type="entry name" value="FAD/NAD-bd_sf"/>
</dbReference>
<dbReference type="InterPro" id="IPR023493">
    <property type="entry name" value="Me_Trp_Oxase_MTOX"/>
</dbReference>
<dbReference type="InterPro" id="IPR045170">
    <property type="entry name" value="MTOX"/>
</dbReference>
<dbReference type="NCBIfam" id="NF008425">
    <property type="entry name" value="PRK11259.1"/>
    <property type="match status" value="1"/>
</dbReference>
<dbReference type="PANTHER" id="PTHR10961:SF7">
    <property type="entry name" value="FAD DEPENDENT OXIDOREDUCTASE DOMAIN-CONTAINING PROTEIN"/>
    <property type="match status" value="1"/>
</dbReference>
<dbReference type="PANTHER" id="PTHR10961">
    <property type="entry name" value="PEROXISOMAL SARCOSINE OXIDASE"/>
    <property type="match status" value="1"/>
</dbReference>
<dbReference type="Pfam" id="PF01266">
    <property type="entry name" value="DAO"/>
    <property type="match status" value="1"/>
</dbReference>
<dbReference type="SUPFAM" id="SSF54373">
    <property type="entry name" value="FAD-linked reductases, C-terminal domain"/>
    <property type="match status" value="1"/>
</dbReference>
<dbReference type="SUPFAM" id="SSF51905">
    <property type="entry name" value="FAD/NAD(P)-binding domain"/>
    <property type="match status" value="1"/>
</dbReference>
<name>MTOX_ECOL5</name>
<keyword id="KW-0274">FAD</keyword>
<keyword id="KW-0285">Flavoprotein</keyword>
<keyword id="KW-0560">Oxidoreductase</keyword>